<sequence>MISKKTLITRDNFDKLILPIYNPIPFIPIKGKGSRIWDQKGKEYIDFSGGIAVTSLGHCHPILNKTLKNQSKMLWHLSNIFTNEPALRLAKKLLSSSFASRIFFANSGAEANEAAFKLARYYSSKIYNFKKNKIISFYNSFHGRTFFTVSVGGQSKYSNNFGPKPAGIVHASFNDINSVKNLIDHDTCAVVVELIQGEGGVIPANLTFVQALKELCKQYNVLLIFDEIQTGIGRTGKLFYYEYYAITPDILTIAKSLGGGFPISAMLTTNEVASVIAPGIHGTTYGGNPLACAVAESVIDIINTKKVLSGVEKKSKKIISELNIINKRFKLFTEIRGRGLLIGIVLKPNVSRNIHKILNFSLSEGVIFLTAGNNVIRLAPSLIIKELDIIEGMKRFYRALEKYLSRKE</sequence>
<reference key="1">
    <citation type="journal article" date="2000" name="Nature">
        <title>Genome sequence of the endocellular bacterial symbiont of aphids Buchnera sp. APS.</title>
        <authorList>
            <person name="Shigenobu S."/>
            <person name="Watanabe H."/>
            <person name="Hattori M."/>
            <person name="Sakaki Y."/>
            <person name="Ishikawa H."/>
        </authorList>
    </citation>
    <scope>NUCLEOTIDE SEQUENCE [LARGE SCALE GENOMIC DNA]</scope>
    <source>
        <strain>APS</strain>
    </source>
</reference>
<feature type="chain" id="PRO_0000112734" description="Acetylornithine/succinyldiaminopimelate aminotransferase">
    <location>
        <begin position="1"/>
        <end position="408"/>
    </location>
</feature>
<feature type="binding site" evidence="1">
    <location>
        <begin position="108"/>
        <end position="109"/>
    </location>
    <ligand>
        <name>pyridoxal 5'-phosphate</name>
        <dbReference type="ChEBI" id="CHEBI:597326"/>
    </ligand>
</feature>
<feature type="binding site" evidence="1">
    <location>
        <position position="141"/>
    </location>
    <ligand>
        <name>pyridoxal 5'-phosphate</name>
        <dbReference type="ChEBI" id="CHEBI:597326"/>
    </ligand>
</feature>
<feature type="binding site" evidence="1">
    <location>
        <position position="144"/>
    </location>
    <ligand>
        <name>N(2)-acetyl-L-ornithine</name>
        <dbReference type="ChEBI" id="CHEBI:57805"/>
    </ligand>
</feature>
<feature type="binding site" evidence="1">
    <location>
        <begin position="226"/>
        <end position="229"/>
    </location>
    <ligand>
        <name>pyridoxal 5'-phosphate</name>
        <dbReference type="ChEBI" id="CHEBI:597326"/>
    </ligand>
</feature>
<feature type="binding site" evidence="1">
    <location>
        <position position="283"/>
    </location>
    <ligand>
        <name>N(2)-acetyl-L-ornithine</name>
        <dbReference type="ChEBI" id="CHEBI:57805"/>
    </ligand>
</feature>
<feature type="binding site" evidence="1">
    <location>
        <position position="284"/>
    </location>
    <ligand>
        <name>pyridoxal 5'-phosphate</name>
        <dbReference type="ChEBI" id="CHEBI:597326"/>
    </ligand>
</feature>
<feature type="modified residue" description="N6-(pyridoxal phosphate)lysine" evidence="1">
    <location>
        <position position="255"/>
    </location>
</feature>
<proteinExistence type="inferred from homology"/>
<protein>
    <recommendedName>
        <fullName evidence="1">Acetylornithine/succinyldiaminopimelate aminotransferase</fullName>
        <shortName evidence="1">ACOAT</shortName>
        <shortName evidence="1">DapATase</shortName>
        <shortName evidence="1">Succinyldiaminopimelate transferase</shortName>
        <ecNumber evidence="1">2.6.1.11</ecNumber>
        <ecNumber evidence="1">2.6.1.17</ecNumber>
    </recommendedName>
</protein>
<organism>
    <name type="scientific">Buchnera aphidicola subsp. Acyrthosiphon pisum (strain APS)</name>
    <name type="common">Acyrthosiphon pisum symbiotic bacterium</name>
    <dbReference type="NCBI Taxonomy" id="107806"/>
    <lineage>
        <taxon>Bacteria</taxon>
        <taxon>Pseudomonadati</taxon>
        <taxon>Pseudomonadota</taxon>
        <taxon>Gammaproteobacteria</taxon>
        <taxon>Enterobacterales</taxon>
        <taxon>Erwiniaceae</taxon>
        <taxon>Buchnera</taxon>
    </lineage>
</organism>
<keyword id="KW-0028">Amino-acid biosynthesis</keyword>
<keyword id="KW-0032">Aminotransferase</keyword>
<keyword id="KW-0055">Arginine biosynthesis</keyword>
<keyword id="KW-0963">Cytoplasm</keyword>
<keyword id="KW-0457">Lysine biosynthesis</keyword>
<keyword id="KW-0663">Pyridoxal phosphate</keyword>
<keyword id="KW-1185">Reference proteome</keyword>
<keyword id="KW-0808">Transferase</keyword>
<name>ARGD_BUCAI</name>
<evidence type="ECO:0000255" key="1">
    <source>
        <dbReference type="HAMAP-Rule" id="MF_01107"/>
    </source>
</evidence>
<dbReference type="EC" id="2.6.1.11" evidence="1"/>
<dbReference type="EC" id="2.6.1.17" evidence="1"/>
<dbReference type="EMBL" id="BA000003">
    <property type="protein sequence ID" value="BAB13227.1"/>
    <property type="molecule type" value="Genomic_DNA"/>
</dbReference>
<dbReference type="RefSeq" id="NP_240341.1">
    <property type="nucleotide sequence ID" value="NC_002528.1"/>
</dbReference>
<dbReference type="RefSeq" id="WP_010896152.1">
    <property type="nucleotide sequence ID" value="NC_002528.1"/>
</dbReference>
<dbReference type="SMR" id="P57600"/>
<dbReference type="STRING" id="563178.BUAP5A_527"/>
<dbReference type="EnsemblBacteria" id="BAB13227">
    <property type="protein sequence ID" value="BAB13227"/>
    <property type="gene ID" value="BAB13227"/>
</dbReference>
<dbReference type="KEGG" id="buc:BU534"/>
<dbReference type="PATRIC" id="fig|107806.10.peg.539"/>
<dbReference type="eggNOG" id="COG4992">
    <property type="taxonomic scope" value="Bacteria"/>
</dbReference>
<dbReference type="HOGENOM" id="CLU_016922_10_1_6"/>
<dbReference type="UniPathway" id="UPA00034">
    <property type="reaction ID" value="UER00020"/>
</dbReference>
<dbReference type="UniPathway" id="UPA00068">
    <property type="reaction ID" value="UER00109"/>
</dbReference>
<dbReference type="Proteomes" id="UP000001806">
    <property type="component" value="Chromosome"/>
</dbReference>
<dbReference type="GO" id="GO:0005737">
    <property type="term" value="C:cytoplasm"/>
    <property type="evidence" value="ECO:0007669"/>
    <property type="project" value="UniProtKB-SubCell"/>
</dbReference>
<dbReference type="GO" id="GO:0042802">
    <property type="term" value="F:identical protein binding"/>
    <property type="evidence" value="ECO:0007669"/>
    <property type="project" value="TreeGrafter"/>
</dbReference>
<dbReference type="GO" id="GO:0003992">
    <property type="term" value="F:N2-acetyl-L-ornithine:2-oxoglutarate 5-aminotransferase activity"/>
    <property type="evidence" value="ECO:0007669"/>
    <property type="project" value="UniProtKB-UniRule"/>
</dbReference>
<dbReference type="GO" id="GO:0030170">
    <property type="term" value="F:pyridoxal phosphate binding"/>
    <property type="evidence" value="ECO:0007669"/>
    <property type="project" value="InterPro"/>
</dbReference>
<dbReference type="GO" id="GO:0009016">
    <property type="term" value="F:succinyldiaminopimelate transaminase activity"/>
    <property type="evidence" value="ECO:0007669"/>
    <property type="project" value="UniProtKB-UniRule"/>
</dbReference>
<dbReference type="GO" id="GO:0006526">
    <property type="term" value="P:L-arginine biosynthetic process"/>
    <property type="evidence" value="ECO:0007669"/>
    <property type="project" value="UniProtKB-UniRule"/>
</dbReference>
<dbReference type="GO" id="GO:0009089">
    <property type="term" value="P:lysine biosynthetic process via diaminopimelate"/>
    <property type="evidence" value="ECO:0007669"/>
    <property type="project" value="UniProtKB-UniRule"/>
</dbReference>
<dbReference type="CDD" id="cd00610">
    <property type="entry name" value="OAT_like"/>
    <property type="match status" value="1"/>
</dbReference>
<dbReference type="FunFam" id="3.40.640.10:FF:000004">
    <property type="entry name" value="Acetylornithine aminotransferase"/>
    <property type="match status" value="1"/>
</dbReference>
<dbReference type="Gene3D" id="3.90.1150.10">
    <property type="entry name" value="Aspartate Aminotransferase, domain 1"/>
    <property type="match status" value="1"/>
</dbReference>
<dbReference type="Gene3D" id="3.40.640.10">
    <property type="entry name" value="Type I PLP-dependent aspartate aminotransferase-like (Major domain)"/>
    <property type="match status" value="1"/>
</dbReference>
<dbReference type="HAMAP" id="MF_01107">
    <property type="entry name" value="ArgD_aminotrans_3"/>
    <property type="match status" value="1"/>
</dbReference>
<dbReference type="InterPro" id="IPR004636">
    <property type="entry name" value="AcOrn/SuccOrn_fam"/>
</dbReference>
<dbReference type="InterPro" id="IPR005814">
    <property type="entry name" value="Aminotrans_3"/>
</dbReference>
<dbReference type="InterPro" id="IPR049704">
    <property type="entry name" value="Aminotrans_3_PPA_site"/>
</dbReference>
<dbReference type="InterPro" id="IPR050103">
    <property type="entry name" value="Class-III_PLP-dep_AT"/>
</dbReference>
<dbReference type="InterPro" id="IPR015424">
    <property type="entry name" value="PyrdxlP-dep_Trfase"/>
</dbReference>
<dbReference type="InterPro" id="IPR015421">
    <property type="entry name" value="PyrdxlP-dep_Trfase_major"/>
</dbReference>
<dbReference type="InterPro" id="IPR015422">
    <property type="entry name" value="PyrdxlP-dep_Trfase_small"/>
</dbReference>
<dbReference type="NCBIfam" id="TIGR00707">
    <property type="entry name" value="argD"/>
    <property type="match status" value="1"/>
</dbReference>
<dbReference type="NCBIfam" id="NF002325">
    <property type="entry name" value="PRK01278.1"/>
    <property type="match status" value="1"/>
</dbReference>
<dbReference type="NCBIfam" id="NF003468">
    <property type="entry name" value="PRK05093.1"/>
    <property type="match status" value="1"/>
</dbReference>
<dbReference type="PANTHER" id="PTHR11986">
    <property type="entry name" value="AMINOTRANSFERASE CLASS III"/>
    <property type="match status" value="1"/>
</dbReference>
<dbReference type="PANTHER" id="PTHR11986:SF113">
    <property type="entry name" value="SUCCINYLORNITHINE TRANSAMINASE"/>
    <property type="match status" value="1"/>
</dbReference>
<dbReference type="Pfam" id="PF00202">
    <property type="entry name" value="Aminotran_3"/>
    <property type="match status" value="1"/>
</dbReference>
<dbReference type="PIRSF" id="PIRSF000521">
    <property type="entry name" value="Transaminase_4ab_Lys_Orn"/>
    <property type="match status" value="1"/>
</dbReference>
<dbReference type="SUPFAM" id="SSF53383">
    <property type="entry name" value="PLP-dependent transferases"/>
    <property type="match status" value="1"/>
</dbReference>
<dbReference type="PROSITE" id="PS00600">
    <property type="entry name" value="AA_TRANSFER_CLASS_3"/>
    <property type="match status" value="1"/>
</dbReference>
<gene>
    <name evidence="1" type="primary">argD</name>
    <name evidence="1" type="synonym">dapC</name>
    <name type="ordered locus">BU534</name>
</gene>
<accession>P57600</accession>
<comment type="function">
    <text evidence="1">Involved in both the arginine and lysine biosynthetic pathways.</text>
</comment>
<comment type="catalytic activity">
    <reaction evidence="1">
        <text>N(2)-acetyl-L-ornithine + 2-oxoglutarate = N-acetyl-L-glutamate 5-semialdehyde + L-glutamate</text>
        <dbReference type="Rhea" id="RHEA:18049"/>
        <dbReference type="ChEBI" id="CHEBI:16810"/>
        <dbReference type="ChEBI" id="CHEBI:29123"/>
        <dbReference type="ChEBI" id="CHEBI:29985"/>
        <dbReference type="ChEBI" id="CHEBI:57805"/>
        <dbReference type="EC" id="2.6.1.11"/>
    </reaction>
</comment>
<comment type="catalytic activity">
    <reaction evidence="1">
        <text>N-succinyl-(2S,6S)-2,6-diaminopimelate + 2-oxoglutarate = (S)-2-succinylamino-6-oxoheptanedioate + L-glutamate</text>
        <dbReference type="Rhea" id="RHEA:11960"/>
        <dbReference type="ChEBI" id="CHEBI:15685"/>
        <dbReference type="ChEBI" id="CHEBI:16810"/>
        <dbReference type="ChEBI" id="CHEBI:29985"/>
        <dbReference type="ChEBI" id="CHEBI:58087"/>
        <dbReference type="EC" id="2.6.1.17"/>
    </reaction>
</comment>
<comment type="cofactor">
    <cofactor evidence="1">
        <name>pyridoxal 5'-phosphate</name>
        <dbReference type="ChEBI" id="CHEBI:597326"/>
    </cofactor>
    <text evidence="1">Binds 1 pyridoxal phosphate per subunit.</text>
</comment>
<comment type="pathway">
    <text evidence="1">Amino-acid biosynthesis; L-arginine biosynthesis; N(2)-acetyl-L-ornithine from L-glutamate: step 4/4.</text>
</comment>
<comment type="pathway">
    <text evidence="1">Amino-acid biosynthesis; L-lysine biosynthesis via DAP pathway; LL-2,6-diaminopimelate from (S)-tetrahydrodipicolinate (succinylase route): step 2/3.</text>
</comment>
<comment type="subunit">
    <text evidence="1">Homodimer.</text>
</comment>
<comment type="subcellular location">
    <subcellularLocation>
        <location evidence="1">Cytoplasm</location>
    </subcellularLocation>
</comment>
<comment type="similarity">
    <text evidence="1">Belongs to the class-III pyridoxal-phosphate-dependent aminotransferase family. ArgD subfamily.</text>
</comment>